<accession>P04109</accession>
<dbReference type="EMBL" id="X03287">
    <property type="protein sequence ID" value="CAA27036.1"/>
    <property type="molecule type" value="Genomic_DNA"/>
</dbReference>
<dbReference type="EMBL" id="X03288">
    <property type="protein sequence ID" value="CAA27036.1"/>
    <property type="status" value="JOINED"/>
    <property type="molecule type" value="Genomic_DNA"/>
</dbReference>
<dbReference type="EMBL" id="X03289">
    <property type="protein sequence ID" value="CAA27036.1"/>
    <property type="status" value="JOINED"/>
    <property type="molecule type" value="Genomic_DNA"/>
</dbReference>
<dbReference type="EMBL" id="X03290">
    <property type="protein sequence ID" value="CAA27036.1"/>
    <property type="status" value="JOINED"/>
    <property type="molecule type" value="Genomic_DNA"/>
</dbReference>
<dbReference type="EMBL" id="X03291">
    <property type="protein sequence ID" value="CAA27036.1"/>
    <property type="status" value="JOINED"/>
    <property type="molecule type" value="Genomic_DNA"/>
</dbReference>
<dbReference type="EMBL" id="X03292">
    <property type="protein sequence ID" value="CAA27036.1"/>
    <property type="status" value="JOINED"/>
    <property type="molecule type" value="Genomic_DNA"/>
</dbReference>
<dbReference type="EMBL" id="M32446">
    <property type="protein sequence ID" value="AAA30073.1"/>
    <property type="molecule type" value="mRNA"/>
</dbReference>
<dbReference type="EMBL" id="K01649">
    <property type="protein sequence ID" value="AAA30076.1"/>
    <property type="molecule type" value="mRNA"/>
</dbReference>
<dbReference type="PIR" id="S03249">
    <property type="entry name" value="MCUR1C"/>
</dbReference>
<dbReference type="RefSeq" id="NP_999768.1">
    <property type="nucleotide sequence ID" value="NM_214603.1"/>
</dbReference>
<dbReference type="SMR" id="P04109"/>
<dbReference type="STRING" id="7668.P04109"/>
<dbReference type="EnsemblMetazoa" id="NM_214603">
    <property type="protein sequence ID" value="NP_999768"/>
    <property type="gene ID" value="GeneID_373443"/>
</dbReference>
<dbReference type="GeneID" id="373443"/>
<dbReference type="KEGG" id="spu:373443"/>
<dbReference type="CTD" id="373443"/>
<dbReference type="eggNOG" id="KOG0027">
    <property type="taxonomic scope" value="Eukaryota"/>
</dbReference>
<dbReference type="HOGENOM" id="CLU_061288_2_1_1"/>
<dbReference type="InParanoid" id="P04109"/>
<dbReference type="OMA" id="HMDDRVI"/>
<dbReference type="OrthoDB" id="26525at2759"/>
<dbReference type="PhylomeDB" id="P04109"/>
<dbReference type="Proteomes" id="UP000007110">
    <property type="component" value="Unassembled WGS sequence"/>
</dbReference>
<dbReference type="GO" id="GO:0005509">
    <property type="term" value="F:calcium ion binding"/>
    <property type="evidence" value="ECO:0007669"/>
    <property type="project" value="InterPro"/>
</dbReference>
<dbReference type="CDD" id="cd00051">
    <property type="entry name" value="EFh"/>
    <property type="match status" value="2"/>
</dbReference>
<dbReference type="FunFam" id="1.10.238.10:FF:000402">
    <property type="entry name" value="Calcium-binding protein SPEC 2D"/>
    <property type="match status" value="1"/>
</dbReference>
<dbReference type="FunFam" id="1.10.238.10:FF:000461">
    <property type="entry name" value="Calcium-binding protein SPEC 2D"/>
    <property type="match status" value="1"/>
</dbReference>
<dbReference type="Gene3D" id="1.10.238.10">
    <property type="entry name" value="EF-hand"/>
    <property type="match status" value="2"/>
</dbReference>
<dbReference type="InterPro" id="IPR050230">
    <property type="entry name" value="CALM/Myosin/TropC-like"/>
</dbReference>
<dbReference type="InterPro" id="IPR011992">
    <property type="entry name" value="EF-hand-dom_pair"/>
</dbReference>
<dbReference type="InterPro" id="IPR018247">
    <property type="entry name" value="EF_Hand_1_Ca_BS"/>
</dbReference>
<dbReference type="InterPro" id="IPR002048">
    <property type="entry name" value="EF_hand_dom"/>
</dbReference>
<dbReference type="PANTHER" id="PTHR23048:SF0">
    <property type="entry name" value="CALMODULIN LIKE 3"/>
    <property type="match status" value="1"/>
</dbReference>
<dbReference type="PANTHER" id="PTHR23048">
    <property type="entry name" value="MYOSIN LIGHT CHAIN 1, 3"/>
    <property type="match status" value="1"/>
</dbReference>
<dbReference type="Pfam" id="PF13499">
    <property type="entry name" value="EF-hand_7"/>
    <property type="match status" value="2"/>
</dbReference>
<dbReference type="SMART" id="SM00054">
    <property type="entry name" value="EFh"/>
    <property type="match status" value="4"/>
</dbReference>
<dbReference type="SUPFAM" id="SSF47473">
    <property type="entry name" value="EF-hand"/>
    <property type="match status" value="1"/>
</dbReference>
<dbReference type="PROSITE" id="PS00018">
    <property type="entry name" value="EF_HAND_1"/>
    <property type="match status" value="4"/>
</dbReference>
<dbReference type="PROSITE" id="PS50222">
    <property type="entry name" value="EF_HAND_2"/>
    <property type="match status" value="4"/>
</dbReference>
<keyword id="KW-0106">Calcium</keyword>
<keyword id="KW-0479">Metal-binding</keyword>
<keyword id="KW-1185">Reference proteome</keyword>
<keyword id="KW-0677">Repeat</keyword>
<sequence length="152" mass="17466">MAAQLLFTDEEVTEFKRRFKNKDTDKSKSITAEELGEFFKSTGKSYTDKQIDKMISDVDTDESGTIDFSEMLMGIAEQMVKWTWKEEHYTKAFDDMDKDGNGSLSPQELREALSASKPPMKRKKIKAIIQKADANKDGKIDREEFMKLIKSC</sequence>
<evidence type="ECO:0000255" key="1">
    <source>
        <dbReference type="PROSITE-ProRule" id="PRU00448"/>
    </source>
</evidence>
<evidence type="ECO:0000256" key="2">
    <source>
        <dbReference type="SAM" id="MobiDB-lite"/>
    </source>
</evidence>
<evidence type="ECO:0000305" key="3"/>
<name>SPE1A_STRPU</name>
<gene>
    <name type="primary">SPEC1</name>
</gene>
<proteinExistence type="evidence at transcript level"/>
<protein>
    <recommendedName>
        <fullName>Calcium-binding protein SPEC 1A</fullName>
    </recommendedName>
</protein>
<comment type="function">
    <text>Calcium-binding protein involved in larval development and metamorphosis. Likely to function as calcium buffers mediating the transport of calcium from the sea water to the blastocoel where calcium is required for skeleton formation.</text>
</comment>
<comment type="tissue specificity">
    <text>Found in cell lineages giving rise to the aboral ectoderm, a squamous epithelium covering the surface of the late stage embryo and larva.</text>
</comment>
<comment type="developmental stage">
    <text>Accumulate in embryos and larvae, but not in adults.</text>
</comment>
<organism>
    <name type="scientific">Strongylocentrotus purpuratus</name>
    <name type="common">Purple sea urchin</name>
    <dbReference type="NCBI Taxonomy" id="7668"/>
    <lineage>
        <taxon>Eukaryota</taxon>
        <taxon>Metazoa</taxon>
        <taxon>Echinodermata</taxon>
        <taxon>Eleutherozoa</taxon>
        <taxon>Echinozoa</taxon>
        <taxon>Echinoidea</taxon>
        <taxon>Euechinoidea</taxon>
        <taxon>Echinacea</taxon>
        <taxon>Camarodonta</taxon>
        <taxon>Echinidea</taxon>
        <taxon>Strongylocentrotidae</taxon>
        <taxon>Strongylocentrotus</taxon>
    </lineage>
</organism>
<reference key="1">
    <citation type="journal article" date="1985" name="J. Mol. Biol.">
        <title>Structure of the Spec1 gene encoding a major calcium-binding protein in the embryonic ectoderm of the sea urchin, Strongylocentrotus purpuratus.</title>
        <authorList>
            <person name="Hardin S.H."/>
            <person name="Carpenter C.D."/>
            <person name="Hardin P.E."/>
            <person name="Bruskin A.M."/>
            <person name="Klein W.H."/>
        </authorList>
    </citation>
    <scope>NUCLEOTIDE SEQUENCE [GENOMIC DNA]</scope>
</reference>
<reference key="2">
    <citation type="journal article" date="1987" name="J. Mol. Evol.">
        <title>Unusual sequence conservation in the 5' and 3' untranslated regions of the sea urchin spec mRNAs.</title>
        <authorList>
            <person name="Hardin P.E."/>
            <person name="Klein W.H."/>
        </authorList>
    </citation>
    <scope>NUCLEOTIDE SEQUENCE [MRNA]</scope>
    <source>
        <tissue>Embryo</tissue>
    </source>
</reference>
<reference key="3">
    <citation type="journal article" date="1984" name="Cell">
        <title>Novel proteins belonging to the troponin C superfamily are encoded by a set of mRNAs in sea urchin embryos.</title>
        <authorList>
            <person name="Carpenter C.D."/>
            <person name="Bruskin A.M."/>
            <person name="Hardin P.E."/>
            <person name="Keast M.J."/>
            <person name="Anstrom J.A."/>
            <person name="Tyner A.L."/>
            <person name="Brandhorst B.P."/>
            <person name="Klein W.H."/>
        </authorList>
    </citation>
    <scope>NUCLEOTIDE SEQUENCE [MRNA] OF 67-152</scope>
</reference>
<feature type="chain" id="PRO_0000073638" description="Calcium-binding protein SPEC 1A">
    <location>
        <begin position="1"/>
        <end position="152"/>
    </location>
</feature>
<feature type="domain" description="EF-hand 1" evidence="1">
    <location>
        <begin position="10"/>
        <end position="45"/>
    </location>
</feature>
<feature type="domain" description="EF-hand 2" evidence="1">
    <location>
        <begin position="46"/>
        <end position="81"/>
    </location>
</feature>
<feature type="domain" description="EF-hand 3" evidence="1">
    <location>
        <begin position="84"/>
        <end position="119"/>
    </location>
</feature>
<feature type="domain" description="EF-hand 4" evidence="1">
    <location>
        <begin position="120"/>
        <end position="152"/>
    </location>
</feature>
<feature type="region of interest" description="Disordered" evidence="2">
    <location>
        <begin position="95"/>
        <end position="121"/>
    </location>
</feature>
<feature type="binding site" evidence="1">
    <location>
        <position position="23"/>
    </location>
    <ligand>
        <name>Ca(2+)</name>
        <dbReference type="ChEBI" id="CHEBI:29108"/>
        <label>1</label>
    </ligand>
</feature>
<feature type="binding site" evidence="1">
    <location>
        <position position="25"/>
    </location>
    <ligand>
        <name>Ca(2+)</name>
        <dbReference type="ChEBI" id="CHEBI:29108"/>
        <label>1</label>
    </ligand>
</feature>
<feature type="binding site" evidence="1">
    <location>
        <position position="27"/>
    </location>
    <ligand>
        <name>Ca(2+)</name>
        <dbReference type="ChEBI" id="CHEBI:29108"/>
        <label>1</label>
    </ligand>
</feature>
<feature type="binding site" evidence="1">
    <location>
        <position position="29"/>
    </location>
    <ligand>
        <name>Ca(2+)</name>
        <dbReference type="ChEBI" id="CHEBI:29108"/>
        <label>1</label>
    </ligand>
</feature>
<feature type="binding site" evidence="1">
    <location>
        <position position="34"/>
    </location>
    <ligand>
        <name>Ca(2+)</name>
        <dbReference type="ChEBI" id="CHEBI:29108"/>
        <label>1</label>
    </ligand>
</feature>
<feature type="binding site" evidence="1">
    <location>
        <position position="59"/>
    </location>
    <ligand>
        <name>Ca(2+)</name>
        <dbReference type="ChEBI" id="CHEBI:29108"/>
        <label>2</label>
    </ligand>
</feature>
<feature type="binding site" evidence="1">
    <location>
        <position position="61"/>
    </location>
    <ligand>
        <name>Ca(2+)</name>
        <dbReference type="ChEBI" id="CHEBI:29108"/>
        <label>2</label>
    </ligand>
</feature>
<feature type="binding site" evidence="1">
    <location>
        <position position="63"/>
    </location>
    <ligand>
        <name>Ca(2+)</name>
        <dbReference type="ChEBI" id="CHEBI:29108"/>
        <label>2</label>
    </ligand>
</feature>
<feature type="binding site" evidence="1">
    <location>
        <position position="65"/>
    </location>
    <ligand>
        <name>Ca(2+)</name>
        <dbReference type="ChEBI" id="CHEBI:29108"/>
        <label>2</label>
    </ligand>
</feature>
<feature type="binding site" evidence="1">
    <location>
        <position position="70"/>
    </location>
    <ligand>
        <name>Ca(2+)</name>
        <dbReference type="ChEBI" id="CHEBI:29108"/>
        <label>2</label>
    </ligand>
</feature>
<feature type="binding site" evidence="1">
    <location>
        <position position="97"/>
    </location>
    <ligand>
        <name>Ca(2+)</name>
        <dbReference type="ChEBI" id="CHEBI:29108"/>
        <label>3</label>
    </ligand>
</feature>
<feature type="binding site" evidence="1">
    <location>
        <position position="99"/>
    </location>
    <ligand>
        <name>Ca(2+)</name>
        <dbReference type="ChEBI" id="CHEBI:29108"/>
        <label>3</label>
    </ligand>
</feature>
<feature type="binding site" evidence="1">
    <location>
        <position position="101"/>
    </location>
    <ligand>
        <name>Ca(2+)</name>
        <dbReference type="ChEBI" id="CHEBI:29108"/>
        <label>3</label>
    </ligand>
</feature>
<feature type="binding site" evidence="1">
    <location>
        <position position="103"/>
    </location>
    <ligand>
        <name>Ca(2+)</name>
        <dbReference type="ChEBI" id="CHEBI:29108"/>
        <label>3</label>
    </ligand>
</feature>
<feature type="binding site" evidence="1">
    <location>
        <position position="108"/>
    </location>
    <ligand>
        <name>Ca(2+)</name>
        <dbReference type="ChEBI" id="CHEBI:29108"/>
        <label>3</label>
    </ligand>
</feature>
<feature type="binding site" evidence="1">
    <location>
        <position position="133"/>
    </location>
    <ligand>
        <name>Ca(2+)</name>
        <dbReference type="ChEBI" id="CHEBI:29108"/>
        <label>4</label>
    </ligand>
</feature>
<feature type="binding site" evidence="1">
    <location>
        <position position="135"/>
    </location>
    <ligand>
        <name>Ca(2+)</name>
        <dbReference type="ChEBI" id="CHEBI:29108"/>
        <label>4</label>
    </ligand>
</feature>
<feature type="binding site" evidence="1">
    <location>
        <position position="137"/>
    </location>
    <ligand>
        <name>Ca(2+)</name>
        <dbReference type="ChEBI" id="CHEBI:29108"/>
        <label>4</label>
    </ligand>
</feature>
<feature type="binding site" evidence="1">
    <location>
        <position position="139"/>
    </location>
    <ligand>
        <name>Ca(2+)</name>
        <dbReference type="ChEBI" id="CHEBI:29108"/>
        <label>4</label>
    </ligand>
</feature>
<feature type="binding site" evidence="1">
    <location>
        <position position="144"/>
    </location>
    <ligand>
        <name>Ca(2+)</name>
        <dbReference type="ChEBI" id="CHEBI:29108"/>
        <label>4</label>
    </ligand>
</feature>
<feature type="sequence conflict" description="In Ref. 2; AAA30073." evidence="3" ref="2">
    <original>A</original>
    <variation>P</variation>
    <location>
        <position position="132"/>
    </location>
</feature>